<dbReference type="EMBL" id="AB240139">
    <property type="protein sequence ID" value="BAE48029.1"/>
    <property type="molecule type" value="Genomic_DNA"/>
</dbReference>
<dbReference type="RefSeq" id="YP_398890.1">
    <property type="nucleotide sequence ID" value="NC_007602.1"/>
</dbReference>
<dbReference type="SMR" id="Q33C06"/>
<dbReference type="GeneID" id="3776368"/>
<dbReference type="KEGG" id="nto:3776368"/>
<dbReference type="OrthoDB" id="375at2759"/>
<dbReference type="GO" id="GO:0009535">
    <property type="term" value="C:chloroplast thylakoid membrane"/>
    <property type="evidence" value="ECO:0007669"/>
    <property type="project" value="UniProtKB-SubCell"/>
</dbReference>
<dbReference type="GO" id="GO:0009523">
    <property type="term" value="C:photosystem II"/>
    <property type="evidence" value="ECO:0007669"/>
    <property type="project" value="UniProtKB-KW"/>
</dbReference>
<dbReference type="GO" id="GO:0016168">
    <property type="term" value="F:chlorophyll binding"/>
    <property type="evidence" value="ECO:0007669"/>
    <property type="project" value="UniProtKB-UniRule"/>
</dbReference>
<dbReference type="GO" id="GO:0045156">
    <property type="term" value="F:electron transporter, transferring electrons within the cyclic electron transport pathway of photosynthesis activity"/>
    <property type="evidence" value="ECO:0007669"/>
    <property type="project" value="InterPro"/>
</dbReference>
<dbReference type="GO" id="GO:0009772">
    <property type="term" value="P:photosynthetic electron transport in photosystem II"/>
    <property type="evidence" value="ECO:0007669"/>
    <property type="project" value="InterPro"/>
</dbReference>
<dbReference type="FunFam" id="3.10.680.10:FF:000001">
    <property type="entry name" value="Photosystem II CP47 reaction center protein"/>
    <property type="match status" value="1"/>
</dbReference>
<dbReference type="Gene3D" id="3.10.680.10">
    <property type="entry name" value="Photosystem II CP47 reaction center protein"/>
    <property type="match status" value="1"/>
</dbReference>
<dbReference type="HAMAP" id="MF_01495">
    <property type="entry name" value="PSII_PsbB_CP47"/>
    <property type="match status" value="1"/>
</dbReference>
<dbReference type="InterPro" id="IPR000932">
    <property type="entry name" value="PS_antenna-like"/>
</dbReference>
<dbReference type="InterPro" id="IPR036001">
    <property type="entry name" value="PS_II_antenna-like_sf"/>
</dbReference>
<dbReference type="InterPro" id="IPR017486">
    <property type="entry name" value="PSII_PsbB"/>
</dbReference>
<dbReference type="NCBIfam" id="TIGR03039">
    <property type="entry name" value="PS_II_CP47"/>
    <property type="match status" value="1"/>
</dbReference>
<dbReference type="PANTHER" id="PTHR33180">
    <property type="entry name" value="PHOTOSYSTEM II CP43 REACTION CENTER PROTEIN"/>
    <property type="match status" value="1"/>
</dbReference>
<dbReference type="PANTHER" id="PTHR33180:SF35">
    <property type="entry name" value="PHOTOSYSTEM II CP47 REACTION CENTER PROTEIN"/>
    <property type="match status" value="1"/>
</dbReference>
<dbReference type="Pfam" id="PF00421">
    <property type="entry name" value="PSII"/>
    <property type="match status" value="1"/>
</dbReference>
<dbReference type="SUPFAM" id="SSF161077">
    <property type="entry name" value="Photosystem II antenna protein-like"/>
    <property type="match status" value="1"/>
</dbReference>
<reference key="1">
    <citation type="journal article" date="2006" name="Mol. Genet. Genomics">
        <title>The chloroplast genome of Nicotiana sylvestris and Nicotiana tomentosiformis: complete sequencing confirms that the Nicotiana sylvestris progenitor is the maternal genome donor of Nicotiana tabacum.</title>
        <authorList>
            <person name="Yukawa M."/>
            <person name="Tsudzuki T."/>
            <person name="Sugiura M."/>
        </authorList>
    </citation>
    <scope>NUCLEOTIDE SEQUENCE [LARGE SCALE GENOMIC DNA]</scope>
</reference>
<proteinExistence type="inferred from homology"/>
<protein>
    <recommendedName>
        <fullName evidence="1">Photosystem II CP47 reaction center protein</fullName>
    </recommendedName>
    <alternativeName>
        <fullName evidence="1">PSII 47 kDa protein</fullName>
    </alternativeName>
    <alternativeName>
        <fullName evidence="1">Protein CP-47</fullName>
    </alternativeName>
</protein>
<keyword id="KW-0148">Chlorophyll</keyword>
<keyword id="KW-0150">Chloroplast</keyword>
<keyword id="KW-0157">Chromophore</keyword>
<keyword id="KW-0472">Membrane</keyword>
<keyword id="KW-0602">Photosynthesis</keyword>
<keyword id="KW-0604">Photosystem II</keyword>
<keyword id="KW-0934">Plastid</keyword>
<keyword id="KW-0793">Thylakoid</keyword>
<keyword id="KW-0812">Transmembrane</keyword>
<keyword id="KW-1133">Transmembrane helix</keyword>
<sequence>MGLPWYRVHTVVLNDPGRLLSVHIMHTALVAGWAGSMALYELAVFDPSDPVLDPMWRQGMFVIPFMTRLGITNSWGGWSITGGTVTNPGIWSYEGVAGAHIVFSGLCFLAAIWHWVYWDLEIFCDERTGKPSLDLPKIFGIHLFLSGVACFGFGAFHVTGLYGPGIWVSDPYGLTGKVQPVNPAWGVEGFDPFVPGGIASHHIAAGTLGILAGLFHLSVRPPQRLYKGLRMGNIETVLSSSIAAVFFAAFVVAGTMWYGSATTPIELFGPTRYQWDQGYFQQEIYRRVSAGLAENQSLSEAWSKIPEKLAFYDYIGNNPAKGGLFRAGSMDNGDGIAVGWLGHPIFRDKEGRELFVRRMPTFFETFPVVLVDGDGIVRADVPFRRAESKYSVEQVGVTVEFYGGELNGVSYSDPATVKKYARRAQLGEIFELDRATLKSDGVFRSSPRGWFTFGHASFALLFFFGHIWHGARTLFRDVFAGIDPDLDAQVEFGAFQKLGDPTTKRQAA</sequence>
<organism>
    <name type="scientific">Nicotiana tomentosiformis</name>
    <name type="common">Tobacco</name>
    <dbReference type="NCBI Taxonomy" id="4098"/>
    <lineage>
        <taxon>Eukaryota</taxon>
        <taxon>Viridiplantae</taxon>
        <taxon>Streptophyta</taxon>
        <taxon>Embryophyta</taxon>
        <taxon>Tracheophyta</taxon>
        <taxon>Spermatophyta</taxon>
        <taxon>Magnoliopsida</taxon>
        <taxon>eudicotyledons</taxon>
        <taxon>Gunneridae</taxon>
        <taxon>Pentapetalae</taxon>
        <taxon>asterids</taxon>
        <taxon>lamiids</taxon>
        <taxon>Solanales</taxon>
        <taxon>Solanaceae</taxon>
        <taxon>Nicotianoideae</taxon>
        <taxon>Nicotianeae</taxon>
        <taxon>Nicotiana</taxon>
    </lineage>
</organism>
<gene>
    <name evidence="1" type="primary">psbB</name>
</gene>
<evidence type="ECO:0000255" key="1">
    <source>
        <dbReference type="HAMAP-Rule" id="MF_01495"/>
    </source>
</evidence>
<comment type="function">
    <text evidence="1">One of the components of the core complex of photosystem II (PSII). It binds chlorophyll and helps catalyze the primary light-induced photochemical processes of PSII. PSII is a light-driven water:plastoquinone oxidoreductase, using light energy to abstract electrons from H(2)O, generating O(2) and a proton gradient subsequently used for ATP formation.</text>
</comment>
<comment type="cofactor">
    <text evidence="1">Binds multiple chlorophylls. PSII binds additional chlorophylls, carotenoids and specific lipids.</text>
</comment>
<comment type="subunit">
    <text evidence="1">PSII is composed of 1 copy each of membrane proteins PsbA, PsbB, PsbC, PsbD, PsbE, PsbF, PsbH, PsbI, PsbJ, PsbK, PsbL, PsbM, PsbT, PsbX, PsbY, PsbZ, Psb30/Ycf12, at least 3 peripheral proteins of the oxygen-evolving complex and a large number of cofactors. It forms dimeric complexes.</text>
</comment>
<comment type="subcellular location">
    <subcellularLocation>
        <location evidence="1">Plastid</location>
        <location evidence="1">Chloroplast thylakoid membrane</location>
        <topology evidence="1">Multi-pass membrane protein</topology>
    </subcellularLocation>
</comment>
<comment type="similarity">
    <text evidence="1">Belongs to the PsbB/PsbC family. PsbB subfamily.</text>
</comment>
<name>PSBB_NICTO</name>
<feature type="chain" id="PRO_0000359844" description="Photosystem II CP47 reaction center protein">
    <location>
        <begin position="1"/>
        <end position="508"/>
    </location>
</feature>
<feature type="transmembrane region" description="Helical" evidence="1">
    <location>
        <begin position="21"/>
        <end position="36"/>
    </location>
</feature>
<feature type="transmembrane region" description="Helical" evidence="1">
    <location>
        <begin position="101"/>
        <end position="115"/>
    </location>
</feature>
<feature type="transmembrane region" description="Helical" evidence="1">
    <location>
        <begin position="140"/>
        <end position="156"/>
    </location>
</feature>
<feature type="transmembrane region" description="Helical" evidence="1">
    <location>
        <begin position="203"/>
        <end position="218"/>
    </location>
</feature>
<feature type="transmembrane region" description="Helical" evidence="1">
    <location>
        <begin position="237"/>
        <end position="252"/>
    </location>
</feature>
<feature type="transmembrane region" description="Helical" evidence="1">
    <location>
        <begin position="457"/>
        <end position="472"/>
    </location>
</feature>
<accession>Q33C06</accession>
<geneLocation type="chloroplast"/>